<dbReference type="EC" id="2.4.2.9" evidence="1"/>
<dbReference type="EMBL" id="CP001157">
    <property type="protein sequence ID" value="ACO80269.1"/>
    <property type="molecule type" value="Genomic_DNA"/>
</dbReference>
<dbReference type="RefSeq" id="WP_012702642.1">
    <property type="nucleotide sequence ID" value="NC_012560.1"/>
</dbReference>
<dbReference type="SMR" id="C1DEU0"/>
<dbReference type="STRING" id="322710.Avin_41360"/>
<dbReference type="EnsemblBacteria" id="ACO80269">
    <property type="protein sequence ID" value="ACO80269"/>
    <property type="gene ID" value="Avin_41360"/>
</dbReference>
<dbReference type="GeneID" id="88187068"/>
<dbReference type="KEGG" id="avn:Avin_41360"/>
<dbReference type="eggNOG" id="COG0035">
    <property type="taxonomic scope" value="Bacteria"/>
</dbReference>
<dbReference type="HOGENOM" id="CLU_067096_2_2_6"/>
<dbReference type="OrthoDB" id="9781675at2"/>
<dbReference type="UniPathway" id="UPA00574">
    <property type="reaction ID" value="UER00636"/>
</dbReference>
<dbReference type="Proteomes" id="UP000002424">
    <property type="component" value="Chromosome"/>
</dbReference>
<dbReference type="GO" id="GO:0005525">
    <property type="term" value="F:GTP binding"/>
    <property type="evidence" value="ECO:0007669"/>
    <property type="project" value="UniProtKB-KW"/>
</dbReference>
<dbReference type="GO" id="GO:0000287">
    <property type="term" value="F:magnesium ion binding"/>
    <property type="evidence" value="ECO:0007669"/>
    <property type="project" value="UniProtKB-UniRule"/>
</dbReference>
<dbReference type="GO" id="GO:0004845">
    <property type="term" value="F:uracil phosphoribosyltransferase activity"/>
    <property type="evidence" value="ECO:0007669"/>
    <property type="project" value="UniProtKB-UniRule"/>
</dbReference>
<dbReference type="GO" id="GO:0044206">
    <property type="term" value="P:UMP salvage"/>
    <property type="evidence" value="ECO:0007669"/>
    <property type="project" value="UniProtKB-UniRule"/>
</dbReference>
<dbReference type="GO" id="GO:0006223">
    <property type="term" value="P:uracil salvage"/>
    <property type="evidence" value="ECO:0007669"/>
    <property type="project" value="InterPro"/>
</dbReference>
<dbReference type="CDD" id="cd06223">
    <property type="entry name" value="PRTases_typeI"/>
    <property type="match status" value="1"/>
</dbReference>
<dbReference type="FunFam" id="3.40.50.2020:FF:000003">
    <property type="entry name" value="Uracil phosphoribosyltransferase"/>
    <property type="match status" value="1"/>
</dbReference>
<dbReference type="Gene3D" id="3.40.50.2020">
    <property type="match status" value="1"/>
</dbReference>
<dbReference type="HAMAP" id="MF_01218_B">
    <property type="entry name" value="Upp_B"/>
    <property type="match status" value="1"/>
</dbReference>
<dbReference type="InterPro" id="IPR000836">
    <property type="entry name" value="PRibTrfase_dom"/>
</dbReference>
<dbReference type="InterPro" id="IPR029057">
    <property type="entry name" value="PRTase-like"/>
</dbReference>
<dbReference type="InterPro" id="IPR034332">
    <property type="entry name" value="Upp_B"/>
</dbReference>
<dbReference type="InterPro" id="IPR050054">
    <property type="entry name" value="UPRTase/APRTase"/>
</dbReference>
<dbReference type="InterPro" id="IPR005765">
    <property type="entry name" value="Ura_phspho_trans"/>
</dbReference>
<dbReference type="NCBIfam" id="NF001097">
    <property type="entry name" value="PRK00129.1"/>
    <property type="match status" value="1"/>
</dbReference>
<dbReference type="NCBIfam" id="TIGR01091">
    <property type="entry name" value="upp"/>
    <property type="match status" value="1"/>
</dbReference>
<dbReference type="PANTHER" id="PTHR32315">
    <property type="entry name" value="ADENINE PHOSPHORIBOSYLTRANSFERASE"/>
    <property type="match status" value="1"/>
</dbReference>
<dbReference type="PANTHER" id="PTHR32315:SF4">
    <property type="entry name" value="URACIL PHOSPHORIBOSYLTRANSFERASE, CHLOROPLASTIC"/>
    <property type="match status" value="1"/>
</dbReference>
<dbReference type="Pfam" id="PF14681">
    <property type="entry name" value="UPRTase"/>
    <property type="match status" value="1"/>
</dbReference>
<dbReference type="SUPFAM" id="SSF53271">
    <property type="entry name" value="PRTase-like"/>
    <property type="match status" value="1"/>
</dbReference>
<comment type="function">
    <text evidence="1">Catalyzes the conversion of uracil and 5-phospho-alpha-D-ribose 1-diphosphate (PRPP) to UMP and diphosphate.</text>
</comment>
<comment type="catalytic activity">
    <reaction evidence="1">
        <text>UMP + diphosphate = 5-phospho-alpha-D-ribose 1-diphosphate + uracil</text>
        <dbReference type="Rhea" id="RHEA:13017"/>
        <dbReference type="ChEBI" id="CHEBI:17568"/>
        <dbReference type="ChEBI" id="CHEBI:33019"/>
        <dbReference type="ChEBI" id="CHEBI:57865"/>
        <dbReference type="ChEBI" id="CHEBI:58017"/>
        <dbReference type="EC" id="2.4.2.9"/>
    </reaction>
</comment>
<comment type="cofactor">
    <cofactor evidence="1">
        <name>Mg(2+)</name>
        <dbReference type="ChEBI" id="CHEBI:18420"/>
    </cofactor>
    <text evidence="1">Binds 1 Mg(2+) ion per subunit. The magnesium is bound as Mg-PRPP.</text>
</comment>
<comment type="activity regulation">
    <text evidence="1">Allosterically activated by GTP.</text>
</comment>
<comment type="pathway">
    <text evidence="1">Pyrimidine metabolism; UMP biosynthesis via salvage pathway; UMP from uracil: step 1/1.</text>
</comment>
<comment type="similarity">
    <text evidence="1">Belongs to the UPRTase family.</text>
</comment>
<reference key="1">
    <citation type="journal article" date="2009" name="J. Bacteriol.">
        <title>Genome sequence of Azotobacter vinelandii, an obligate aerobe specialized to support diverse anaerobic metabolic processes.</title>
        <authorList>
            <person name="Setubal J.C."/>
            <person name="Dos Santos P."/>
            <person name="Goldman B.S."/>
            <person name="Ertesvaag H."/>
            <person name="Espin G."/>
            <person name="Rubio L.M."/>
            <person name="Valla S."/>
            <person name="Almeida N.F."/>
            <person name="Balasubramanian D."/>
            <person name="Cromes L."/>
            <person name="Curatti L."/>
            <person name="Du Z."/>
            <person name="Godsy E."/>
            <person name="Goodner B."/>
            <person name="Hellner-Burris K."/>
            <person name="Hernandez J.A."/>
            <person name="Houmiel K."/>
            <person name="Imperial J."/>
            <person name="Kennedy C."/>
            <person name="Larson T.J."/>
            <person name="Latreille P."/>
            <person name="Ligon L.S."/>
            <person name="Lu J."/>
            <person name="Maerk M."/>
            <person name="Miller N.M."/>
            <person name="Norton S."/>
            <person name="O'Carroll I.P."/>
            <person name="Paulsen I."/>
            <person name="Raulfs E.C."/>
            <person name="Roemer R."/>
            <person name="Rosser J."/>
            <person name="Segura D."/>
            <person name="Slater S."/>
            <person name="Stricklin S.L."/>
            <person name="Studholme D.J."/>
            <person name="Sun J."/>
            <person name="Viana C.J."/>
            <person name="Wallin E."/>
            <person name="Wang B."/>
            <person name="Wheeler C."/>
            <person name="Zhu H."/>
            <person name="Dean D.R."/>
            <person name="Dixon R."/>
            <person name="Wood D."/>
        </authorList>
    </citation>
    <scope>NUCLEOTIDE SEQUENCE [LARGE SCALE GENOMIC DNA]</scope>
    <source>
        <strain>DJ / ATCC BAA-1303</strain>
    </source>
</reference>
<gene>
    <name evidence="1" type="primary">upp</name>
    <name type="ordered locus">Avin_41360</name>
</gene>
<name>UPP_AZOVD</name>
<feature type="chain" id="PRO_1000213922" description="Uracil phosphoribosyltransferase">
    <location>
        <begin position="1"/>
        <end position="212"/>
    </location>
</feature>
<feature type="binding site" evidence="1">
    <location>
        <position position="78"/>
    </location>
    <ligand>
        <name>5-phospho-alpha-D-ribose 1-diphosphate</name>
        <dbReference type="ChEBI" id="CHEBI:58017"/>
    </ligand>
</feature>
<feature type="binding site" evidence="1">
    <location>
        <position position="103"/>
    </location>
    <ligand>
        <name>5-phospho-alpha-D-ribose 1-diphosphate</name>
        <dbReference type="ChEBI" id="CHEBI:58017"/>
    </ligand>
</feature>
<feature type="binding site" evidence="1">
    <location>
        <begin position="130"/>
        <end position="138"/>
    </location>
    <ligand>
        <name>5-phospho-alpha-D-ribose 1-diphosphate</name>
        <dbReference type="ChEBI" id="CHEBI:58017"/>
    </ligand>
</feature>
<feature type="binding site" evidence="1">
    <location>
        <position position="193"/>
    </location>
    <ligand>
        <name>uracil</name>
        <dbReference type="ChEBI" id="CHEBI:17568"/>
    </ligand>
</feature>
<feature type="binding site" evidence="1">
    <location>
        <begin position="198"/>
        <end position="200"/>
    </location>
    <ligand>
        <name>uracil</name>
        <dbReference type="ChEBI" id="CHEBI:17568"/>
    </ligand>
</feature>
<feature type="binding site" evidence="1">
    <location>
        <position position="199"/>
    </location>
    <ligand>
        <name>5-phospho-alpha-D-ribose 1-diphosphate</name>
        <dbReference type="ChEBI" id="CHEBI:58017"/>
    </ligand>
</feature>
<keyword id="KW-0021">Allosteric enzyme</keyword>
<keyword id="KW-0328">Glycosyltransferase</keyword>
<keyword id="KW-0342">GTP-binding</keyword>
<keyword id="KW-0460">Magnesium</keyword>
<keyword id="KW-0547">Nucleotide-binding</keyword>
<keyword id="KW-0808">Transferase</keyword>
<organism>
    <name type="scientific">Azotobacter vinelandii (strain DJ / ATCC BAA-1303)</name>
    <dbReference type="NCBI Taxonomy" id="322710"/>
    <lineage>
        <taxon>Bacteria</taxon>
        <taxon>Pseudomonadati</taxon>
        <taxon>Pseudomonadota</taxon>
        <taxon>Gammaproteobacteria</taxon>
        <taxon>Pseudomonadales</taxon>
        <taxon>Pseudomonadaceae</taxon>
        <taxon>Azotobacter</taxon>
    </lineage>
</organism>
<evidence type="ECO:0000255" key="1">
    <source>
        <dbReference type="HAMAP-Rule" id="MF_01218"/>
    </source>
</evidence>
<accession>C1DEU0</accession>
<proteinExistence type="inferred from homology"/>
<protein>
    <recommendedName>
        <fullName evidence="1">Uracil phosphoribosyltransferase</fullName>
        <ecNumber evidence="1">2.4.2.9</ecNumber>
    </recommendedName>
    <alternativeName>
        <fullName evidence="1">UMP pyrophosphorylase</fullName>
    </alternativeName>
    <alternativeName>
        <fullName evidence="1">UPRTase</fullName>
    </alternativeName>
</protein>
<sequence length="212" mass="23164">MPIHEIRHPLIRHKLGLMRRADISTKSFRELAQEVGALLTYEATKDLPLENYRIEGWCGPVEVEKIAGKKITVVPILRAGIGMLDGVLRLIPNAKVSVVGLSRDEETLVAHTYVEKLVGEIDQRLALIVDPMLATGGSMAATVDMLKKAGCKEIRALVLVAAPEGIRLLERTHPDVTIYTAAIDQRLNENGYIIPGLGDAGDKVFGTKQKPS</sequence>